<protein>
    <recommendedName>
        <fullName>U3-theraphotoxin-Hhn1a 8</fullName>
        <shortName>U3-TRTX-Hhn1a</shortName>
    </recommendedName>
    <alternativeName>
        <fullName>Hainantoxin-VIII.8</fullName>
        <shortName>HNTX-VIII.8</shortName>
    </alternativeName>
    <alternativeName>
        <fullName>Peptide F4-27.90</fullName>
    </alternativeName>
</protein>
<proteinExistence type="evidence at protein level"/>
<dbReference type="EMBL" id="GU293040">
    <property type="protein sequence ID" value="ADB56856.1"/>
    <property type="molecule type" value="mRNA"/>
</dbReference>
<dbReference type="SMR" id="D2Y2G3"/>
<dbReference type="ArachnoServer" id="AS001657">
    <property type="toxin name" value="U3-theraphotoxin-Hhn1a"/>
</dbReference>
<dbReference type="GO" id="GO:0005576">
    <property type="term" value="C:extracellular region"/>
    <property type="evidence" value="ECO:0007669"/>
    <property type="project" value="UniProtKB-SubCell"/>
</dbReference>
<dbReference type="GO" id="GO:0008200">
    <property type="term" value="F:ion channel inhibitor activity"/>
    <property type="evidence" value="ECO:0007669"/>
    <property type="project" value="InterPro"/>
</dbReference>
<dbReference type="GO" id="GO:0090729">
    <property type="term" value="F:toxin activity"/>
    <property type="evidence" value="ECO:0007669"/>
    <property type="project" value="UniProtKB-KW"/>
</dbReference>
<dbReference type="InterPro" id="IPR011696">
    <property type="entry name" value="Huwentoxin-1"/>
</dbReference>
<dbReference type="InterPro" id="IPR013140">
    <property type="entry name" value="Huwentoxin_CS1"/>
</dbReference>
<dbReference type="Pfam" id="PF07740">
    <property type="entry name" value="Toxin_12"/>
    <property type="match status" value="1"/>
</dbReference>
<dbReference type="SUPFAM" id="SSF57059">
    <property type="entry name" value="omega toxin-like"/>
    <property type="match status" value="1"/>
</dbReference>
<dbReference type="PROSITE" id="PS60021">
    <property type="entry name" value="HWTX_1"/>
    <property type="match status" value="1"/>
</dbReference>
<organism>
    <name type="scientific">Cyriopagopus hainanus</name>
    <name type="common">Chinese bird spider</name>
    <name type="synonym">Haplopelma hainanum</name>
    <dbReference type="NCBI Taxonomy" id="209901"/>
    <lineage>
        <taxon>Eukaryota</taxon>
        <taxon>Metazoa</taxon>
        <taxon>Ecdysozoa</taxon>
        <taxon>Arthropoda</taxon>
        <taxon>Chelicerata</taxon>
        <taxon>Arachnida</taxon>
        <taxon>Araneae</taxon>
        <taxon>Mygalomorphae</taxon>
        <taxon>Theraphosidae</taxon>
        <taxon>Haplopelma</taxon>
    </lineage>
</organism>
<evidence type="ECO:0000250" key="1"/>
<evidence type="ECO:0000250" key="2">
    <source>
        <dbReference type="UniProtKB" id="B3FIS6"/>
    </source>
</evidence>
<evidence type="ECO:0000255" key="3"/>
<evidence type="ECO:0000269" key="4">
    <source>
    </source>
</evidence>
<evidence type="ECO:0000305" key="5"/>
<reference key="1">
    <citation type="journal article" date="2010" name="J. Proteome Res.">
        <title>Molecular diversification of peptide toxins from the tarantula Haplopelma hainanum (Ornithoctonus hainana) venom based on transcriptomic, peptidomic, and genomic analyses.</title>
        <authorList>
            <person name="Tang X."/>
            <person name="Zhang Y."/>
            <person name="Hu W."/>
            <person name="Xu D."/>
            <person name="Tao H."/>
            <person name="Yang X."/>
            <person name="Li Y."/>
            <person name="Jiang L."/>
            <person name="Liang S."/>
        </authorList>
    </citation>
    <scope>NUCLEOTIDE SEQUENCE [LARGE SCALE MRNA]</scope>
    <scope>PROTEIN SEQUENCE OF 53-85</scope>
    <scope>IDENTIFICATION BY MASS SPECTROMETRY</scope>
    <source>
        <tissue>Venom</tissue>
        <tissue>Venom gland</tissue>
    </source>
</reference>
<name>H8A08_CYRHA</name>
<accession>D2Y2G3</accession>
<feature type="signal peptide" evidence="3">
    <location>
        <begin position="1"/>
        <end position="24"/>
    </location>
</feature>
<feature type="propeptide" id="PRO_0000400593" evidence="4">
    <location>
        <begin position="25"/>
        <end position="52"/>
    </location>
</feature>
<feature type="peptide" id="PRO_0000400594" description="U3-theraphotoxin-Hhn1a 8">
    <location>
        <begin position="53"/>
        <end position="87"/>
    </location>
</feature>
<feature type="disulfide bond" evidence="2">
    <location>
        <begin position="54"/>
        <end position="67"/>
    </location>
</feature>
<feature type="disulfide bond" evidence="2">
    <location>
        <begin position="61"/>
        <end position="72"/>
    </location>
</feature>
<feature type="disulfide bond" evidence="2">
    <location>
        <begin position="66"/>
        <end position="79"/>
    </location>
</feature>
<sequence length="87" mass="10083">MVNMKASMFLTFAGLVLLFVVCYASGSEEKEFPKEMLSSIFAVDNDFKQEERDCAGYMRECKEKLCCSGYVCSSRWKWCVLPAPWRR</sequence>
<comment type="function">
    <text evidence="1">Ion channel inhibitor.</text>
</comment>
<comment type="subcellular location">
    <subcellularLocation>
        <location>Secreted</location>
    </subcellularLocation>
</comment>
<comment type="tissue specificity">
    <text>Expressed by the venom gland.</text>
</comment>
<comment type="domain">
    <text evidence="1">The presence of a 'disulfide through disulfide knot' structurally defines this protein as a knottin.</text>
</comment>
<comment type="similarity">
    <text evidence="5">Belongs to the neurotoxin 10 (Hwtx-1) family. 51 (Hntx-8) subfamily. Hntx-8 sub-subfamily.</text>
</comment>
<keyword id="KW-0903">Direct protein sequencing</keyword>
<keyword id="KW-1015">Disulfide bond</keyword>
<keyword id="KW-0872">Ion channel impairing toxin</keyword>
<keyword id="KW-0960">Knottin</keyword>
<keyword id="KW-0964">Secreted</keyword>
<keyword id="KW-0732">Signal</keyword>
<keyword id="KW-0800">Toxin</keyword>